<proteinExistence type="inferred from homology"/>
<protein>
    <recommendedName>
        <fullName evidence="2">4-hydroxybenzoate polyprenyltransferase, mitochondrial</fullName>
        <shortName evidence="2">4-HB polyprenyltransferase</shortName>
        <ecNumber evidence="2">2.5.1.39</ecNumber>
    </recommendedName>
    <alternativeName>
        <fullName>Coenzyme Q biosynthesis protein 2</fullName>
    </alternativeName>
    <alternativeName>
        <fullName evidence="2">Para-hydroxybenzoate--polyprenyltransferase</fullName>
        <shortName evidence="2">PHB:PPT</shortName>
        <shortName evidence="2">PHB:polyprenyltransferase</shortName>
    </alternativeName>
</protein>
<accession>Q16QL3</accession>
<feature type="transit peptide" description="Mitochondrion" evidence="2">
    <location>
        <begin position="1"/>
        <end position="95"/>
    </location>
</feature>
<feature type="chain" id="PRO_0000307702" description="4-hydroxybenzoate polyprenyltransferase, mitochondrial" evidence="2">
    <location>
        <begin position="96"/>
        <end position="441"/>
    </location>
</feature>
<feature type="transmembrane region" description="Helical" evidence="2">
    <location>
        <begin position="129"/>
        <end position="149"/>
    </location>
</feature>
<feature type="transmembrane region" description="Helical" evidence="2">
    <location>
        <begin position="154"/>
        <end position="174"/>
    </location>
</feature>
<feature type="transmembrane region" description="Helical" evidence="2">
    <location>
        <begin position="204"/>
        <end position="224"/>
    </location>
</feature>
<feature type="transmembrane region" description="Helical" evidence="2">
    <location>
        <begin position="225"/>
        <end position="245"/>
    </location>
</feature>
<feature type="transmembrane region" description="Helical" evidence="2">
    <location>
        <begin position="246"/>
        <end position="266"/>
    </location>
</feature>
<feature type="transmembrane region" description="Helical" evidence="2">
    <location>
        <begin position="271"/>
        <end position="291"/>
    </location>
</feature>
<feature type="transmembrane region" description="Helical" evidence="2">
    <location>
        <begin position="322"/>
        <end position="342"/>
    </location>
</feature>
<feature type="transmembrane region" description="Helical" evidence="2">
    <location>
        <begin position="378"/>
        <end position="398"/>
    </location>
</feature>
<feature type="region of interest" description="Disordered" evidence="3">
    <location>
        <begin position="405"/>
        <end position="441"/>
    </location>
</feature>
<feature type="compositionally biased region" description="Low complexity" evidence="3">
    <location>
        <begin position="408"/>
        <end position="424"/>
    </location>
</feature>
<feature type="compositionally biased region" description="Polar residues" evidence="3">
    <location>
        <begin position="432"/>
        <end position="441"/>
    </location>
</feature>
<organism>
    <name type="scientific">Aedes aegypti</name>
    <name type="common">Yellowfever mosquito</name>
    <name type="synonym">Culex aegypti</name>
    <dbReference type="NCBI Taxonomy" id="7159"/>
    <lineage>
        <taxon>Eukaryota</taxon>
        <taxon>Metazoa</taxon>
        <taxon>Ecdysozoa</taxon>
        <taxon>Arthropoda</taxon>
        <taxon>Hexapoda</taxon>
        <taxon>Insecta</taxon>
        <taxon>Pterygota</taxon>
        <taxon>Neoptera</taxon>
        <taxon>Endopterygota</taxon>
        <taxon>Diptera</taxon>
        <taxon>Nematocera</taxon>
        <taxon>Culicoidea</taxon>
        <taxon>Culicidae</taxon>
        <taxon>Culicinae</taxon>
        <taxon>Aedini</taxon>
        <taxon>Aedes</taxon>
        <taxon>Stegomyia</taxon>
    </lineage>
</organism>
<sequence length="441" mass="48432">MLRKLTSNSSRWTTTHLGSLWQEVGGHPIRRGLILHHHCRPLAAVSSGVILRQKEESRWSPNSGGKLANLRCWPEYRLHSATKRRTLGELVLRDYSSNNISDKKPEPKSLLQSIVQNPYARLMRIDRPIGSWLLFWPCGWSIALSAPAGCWPDLWTLTLFGAGAFIMRGAGCTINDMWDRDIDGKVARTRNRPLVAGELTSADAWFFLGAQLGVGLLILLELNWYSIVLGASSLGLVIIYPLMKRITHWPQLVLGMTFNWGALLGWSATQGSVMWSACLPLYVAGVCWTIVYDTIYAHQDKVDDALLGIKSTAIRFGDNTKLWLSGFSTAMIGGLVASGMVCEQTWPYYSAVGVISAHLAHQIYSLNIDNPTDCATKFISNHQVGLILFLGIVLGTLYKGYSQRAGKSSTTSSSSTSSSSSPSSGLLLAATNHHQPARQAS</sequence>
<keyword id="KW-0414">Isoprene biosynthesis</keyword>
<keyword id="KW-0472">Membrane</keyword>
<keyword id="KW-0496">Mitochondrion</keyword>
<keyword id="KW-0999">Mitochondrion inner membrane</keyword>
<keyword id="KW-1185">Reference proteome</keyword>
<keyword id="KW-0808">Transferase</keyword>
<keyword id="KW-0809">Transit peptide</keyword>
<keyword id="KW-0812">Transmembrane</keyword>
<keyword id="KW-1133">Transmembrane helix</keyword>
<keyword id="KW-0831">Ubiquinone biosynthesis</keyword>
<evidence type="ECO:0000250" key="1">
    <source>
        <dbReference type="UniProtKB" id="Q9VHS7"/>
    </source>
</evidence>
<evidence type="ECO:0000255" key="2">
    <source>
        <dbReference type="HAMAP-Rule" id="MF_03189"/>
    </source>
</evidence>
<evidence type="ECO:0000256" key="3">
    <source>
        <dbReference type="SAM" id="MobiDB-lite"/>
    </source>
</evidence>
<evidence type="ECO:0000312" key="4">
    <source>
        <dbReference type="EMBL" id="EAT36680.1"/>
    </source>
</evidence>
<gene>
    <name evidence="1 2" type="primary">coq2</name>
    <name type="ORF">AAEL011249</name>
</gene>
<dbReference type="EC" id="2.5.1.39" evidence="2"/>
<dbReference type="EMBL" id="CH477745">
    <property type="protein sequence ID" value="EAT36680.1"/>
    <property type="molecule type" value="Genomic_DNA"/>
</dbReference>
<dbReference type="RefSeq" id="XP_001661527.1">
    <property type="nucleotide sequence ID" value="XM_001661477.1"/>
</dbReference>
<dbReference type="SMR" id="Q16QL3"/>
<dbReference type="FunCoup" id="Q16QL3">
    <property type="interactions" value="845"/>
</dbReference>
<dbReference type="STRING" id="7159.Q16QL3"/>
<dbReference type="PaxDb" id="7159-AAEL011249-PA"/>
<dbReference type="VEuPathDB" id="VectorBase:AAEL022363"/>
<dbReference type="eggNOG" id="KOG1381">
    <property type="taxonomic scope" value="Eukaryota"/>
</dbReference>
<dbReference type="HOGENOM" id="CLU_034879_0_4_1"/>
<dbReference type="InParanoid" id="Q16QL3"/>
<dbReference type="OMA" id="WCMIYDT"/>
<dbReference type="PhylomeDB" id="Q16QL3"/>
<dbReference type="UniPathway" id="UPA00232"/>
<dbReference type="Proteomes" id="UP000008820">
    <property type="component" value="Unassembled WGS sequence"/>
</dbReference>
<dbReference type="Proteomes" id="UP000682892">
    <property type="component" value="Chromosome 3"/>
</dbReference>
<dbReference type="GO" id="GO:0005743">
    <property type="term" value="C:mitochondrial inner membrane"/>
    <property type="evidence" value="ECO:0000250"/>
    <property type="project" value="UniProtKB"/>
</dbReference>
<dbReference type="GO" id="GO:0005736">
    <property type="term" value="C:RNA polymerase I complex"/>
    <property type="evidence" value="ECO:0000250"/>
    <property type="project" value="UniProtKB"/>
</dbReference>
<dbReference type="GO" id="GO:0005666">
    <property type="term" value="C:RNA polymerase III complex"/>
    <property type="evidence" value="ECO:0000250"/>
    <property type="project" value="UniProtKB"/>
</dbReference>
<dbReference type="GO" id="GO:0008412">
    <property type="term" value="F:4-hydroxybenzoate polyprenyltransferase activity"/>
    <property type="evidence" value="ECO:0000250"/>
    <property type="project" value="UniProtKB"/>
</dbReference>
<dbReference type="GO" id="GO:0008299">
    <property type="term" value="P:isoprenoid biosynthetic process"/>
    <property type="evidence" value="ECO:0007669"/>
    <property type="project" value="UniProtKB-UniRule"/>
</dbReference>
<dbReference type="GO" id="GO:0006360">
    <property type="term" value="P:transcription by RNA polymerase I"/>
    <property type="evidence" value="ECO:0000250"/>
    <property type="project" value="UniProtKB"/>
</dbReference>
<dbReference type="GO" id="GO:0006383">
    <property type="term" value="P:transcription by RNA polymerase III"/>
    <property type="evidence" value="ECO:0000250"/>
    <property type="project" value="UniProtKB"/>
</dbReference>
<dbReference type="GO" id="GO:0006744">
    <property type="term" value="P:ubiquinone biosynthetic process"/>
    <property type="evidence" value="ECO:0000250"/>
    <property type="project" value="UniProtKB"/>
</dbReference>
<dbReference type="CDD" id="cd13959">
    <property type="entry name" value="PT_UbiA_COQ2"/>
    <property type="match status" value="1"/>
</dbReference>
<dbReference type="FunFam" id="1.20.120.1780:FF:000001">
    <property type="entry name" value="4-hydroxybenzoate octaprenyltransferase"/>
    <property type="match status" value="1"/>
</dbReference>
<dbReference type="FunFam" id="1.10.357.140:FF:000003">
    <property type="entry name" value="4-hydroxybenzoate polyprenyltransferase, mitochondrial"/>
    <property type="match status" value="1"/>
</dbReference>
<dbReference type="Gene3D" id="1.10.357.140">
    <property type="entry name" value="UbiA prenyltransferase"/>
    <property type="match status" value="1"/>
</dbReference>
<dbReference type="HAMAP" id="MF_01635">
    <property type="entry name" value="UbiA"/>
    <property type="match status" value="1"/>
</dbReference>
<dbReference type="InterPro" id="IPR006370">
    <property type="entry name" value="HB_polyprenyltransferase-like"/>
</dbReference>
<dbReference type="InterPro" id="IPR039653">
    <property type="entry name" value="Prenyltransferase"/>
</dbReference>
<dbReference type="InterPro" id="IPR000537">
    <property type="entry name" value="UbiA_prenyltransferase"/>
</dbReference>
<dbReference type="InterPro" id="IPR030470">
    <property type="entry name" value="UbiA_prenylTrfase_CS"/>
</dbReference>
<dbReference type="InterPro" id="IPR044878">
    <property type="entry name" value="UbiA_sf"/>
</dbReference>
<dbReference type="NCBIfam" id="TIGR01474">
    <property type="entry name" value="ubiA_proteo"/>
    <property type="match status" value="1"/>
</dbReference>
<dbReference type="PANTHER" id="PTHR11048:SF28">
    <property type="entry name" value="4-HYDROXYBENZOATE POLYPRENYLTRANSFERASE, MITOCHONDRIAL"/>
    <property type="match status" value="1"/>
</dbReference>
<dbReference type="PANTHER" id="PTHR11048">
    <property type="entry name" value="PRENYLTRANSFERASES"/>
    <property type="match status" value="1"/>
</dbReference>
<dbReference type="Pfam" id="PF01040">
    <property type="entry name" value="UbiA"/>
    <property type="match status" value="1"/>
</dbReference>
<dbReference type="PROSITE" id="PS00943">
    <property type="entry name" value="UBIA"/>
    <property type="match status" value="1"/>
</dbReference>
<comment type="function">
    <text evidence="2">Catalyzes the prenylation of para-hydroxybenzoate (PHB) with an all-trans polyprenyl group. Mediates the second step in the final reaction sequence of coenzyme Q (CoQ) biosynthesis, which is the condensation of the polyisoprenoid side chain with PHB, generating the first membrane-bound Q intermediate.</text>
</comment>
<comment type="catalytic activity">
    <reaction evidence="2">
        <text>an all-trans-polyprenyl diphosphate + 4-hydroxybenzoate = a 4-hydroxy-3-(all-trans-polyprenyl)benzoate + diphosphate</text>
        <dbReference type="Rhea" id="RHEA:44504"/>
        <dbReference type="Rhea" id="RHEA-COMP:9514"/>
        <dbReference type="Rhea" id="RHEA-COMP:9564"/>
        <dbReference type="ChEBI" id="CHEBI:17879"/>
        <dbReference type="ChEBI" id="CHEBI:33019"/>
        <dbReference type="ChEBI" id="CHEBI:58914"/>
        <dbReference type="ChEBI" id="CHEBI:78396"/>
        <dbReference type="EC" id="2.5.1.39"/>
    </reaction>
</comment>
<comment type="cofactor">
    <cofactor evidence="2">
        <name>Mg(2+)</name>
        <dbReference type="ChEBI" id="CHEBI:18420"/>
    </cofactor>
</comment>
<comment type="pathway">
    <text evidence="2">Cofactor biosynthesis; ubiquinone biosynthesis.</text>
</comment>
<comment type="subcellular location">
    <subcellularLocation>
        <location evidence="2">Mitochondrion inner membrane</location>
        <topology evidence="2">Multi-pass membrane protein</topology>
        <orientation evidence="2">Matrix side</orientation>
    </subcellularLocation>
</comment>
<comment type="similarity">
    <text evidence="2">Belongs to the UbiA prenyltransferase family.</text>
</comment>
<name>COQ2_AEDAE</name>
<reference evidence="4" key="1">
    <citation type="journal article" date="2007" name="Science">
        <title>Genome sequence of Aedes aegypti, a major arbovirus vector.</title>
        <authorList>
            <person name="Nene V."/>
            <person name="Wortman J.R."/>
            <person name="Lawson D."/>
            <person name="Haas B.J."/>
            <person name="Kodira C.D."/>
            <person name="Tu Z.J."/>
            <person name="Loftus B.J."/>
            <person name="Xi Z."/>
            <person name="Megy K."/>
            <person name="Grabherr M."/>
            <person name="Ren Q."/>
            <person name="Zdobnov E.M."/>
            <person name="Lobo N.F."/>
            <person name="Campbell K.S."/>
            <person name="Brown S.E."/>
            <person name="Bonaldo M.F."/>
            <person name="Zhu J."/>
            <person name="Sinkins S.P."/>
            <person name="Hogenkamp D.G."/>
            <person name="Amedeo P."/>
            <person name="Arensburger P."/>
            <person name="Atkinson P.W."/>
            <person name="Bidwell S.L."/>
            <person name="Biedler J."/>
            <person name="Birney E."/>
            <person name="Bruggner R.V."/>
            <person name="Costas J."/>
            <person name="Coy M.R."/>
            <person name="Crabtree J."/>
            <person name="Crawford M."/>
            <person name="DeBruyn B."/>
            <person name="DeCaprio D."/>
            <person name="Eiglmeier K."/>
            <person name="Eisenstadt E."/>
            <person name="El-Dorry H."/>
            <person name="Gelbart W.M."/>
            <person name="Gomes S.L."/>
            <person name="Hammond M."/>
            <person name="Hannick L.I."/>
            <person name="Hogan J.R."/>
            <person name="Holmes M.H."/>
            <person name="Jaffe D."/>
            <person name="Johnston S.J."/>
            <person name="Kennedy R.C."/>
            <person name="Koo H."/>
            <person name="Kravitz S."/>
            <person name="Kriventseva E.V."/>
            <person name="Kulp D."/>
            <person name="Labutti K."/>
            <person name="Lee E."/>
            <person name="Li S."/>
            <person name="Lovin D.D."/>
            <person name="Mao C."/>
            <person name="Mauceli E."/>
            <person name="Menck C.F."/>
            <person name="Miller J.R."/>
            <person name="Montgomery P."/>
            <person name="Mori A."/>
            <person name="Nascimento A.L."/>
            <person name="Naveira H.F."/>
            <person name="Nusbaum C."/>
            <person name="O'Leary S.B."/>
            <person name="Orvis J."/>
            <person name="Pertea M."/>
            <person name="Quesneville H."/>
            <person name="Reidenbach K.R."/>
            <person name="Rogers Y.-H.C."/>
            <person name="Roth C.W."/>
            <person name="Schneider J.R."/>
            <person name="Schatz M."/>
            <person name="Shumway M."/>
            <person name="Stanke M."/>
            <person name="Stinson E.O."/>
            <person name="Tubio J.M.C."/>
            <person name="Vanzee J.P."/>
            <person name="Verjovski-Almeida S."/>
            <person name="Werner D."/>
            <person name="White O.R."/>
            <person name="Wyder S."/>
            <person name="Zeng Q."/>
            <person name="Zhao Q."/>
            <person name="Zhao Y."/>
            <person name="Hill C.A."/>
            <person name="Raikhel A.S."/>
            <person name="Soares M.B."/>
            <person name="Knudson D.L."/>
            <person name="Lee N.H."/>
            <person name="Galagan J."/>
            <person name="Salzberg S.L."/>
            <person name="Paulsen I.T."/>
            <person name="Dimopoulos G."/>
            <person name="Collins F.H."/>
            <person name="Bruce B."/>
            <person name="Fraser-Liggett C.M."/>
            <person name="Severson D.W."/>
        </authorList>
    </citation>
    <scope>NUCLEOTIDE SEQUENCE [LARGE SCALE GENOMIC DNA]</scope>
    <source>
        <strain>LVPib12</strain>
    </source>
</reference>